<name>RL37A_PLAF7</name>
<proteinExistence type="evidence at protein level"/>
<accession>O96184</accession>
<accession>A0A143ZY21</accession>
<accession>A0A143ZYX3</accession>
<keyword id="KW-0002">3D-structure</keyword>
<keyword id="KW-0025">Alternative splicing</keyword>
<keyword id="KW-0963">Cytoplasm</keyword>
<keyword id="KW-0479">Metal-binding</keyword>
<keyword id="KW-1185">Reference proteome</keyword>
<keyword id="KW-0687">Ribonucleoprotein</keyword>
<keyword id="KW-0689">Ribosomal protein</keyword>
<keyword id="KW-0862">Zinc</keyword>
<keyword id="KW-0863">Zinc-finger</keyword>
<sequence length="96" mass="10799">MSRRTKKVGLTGKYGTRYGSSLRKQIKKIELMQHAKYLCTFCGKTATKRTCVGIWKCKKCKRKVCGGAWSLTTPAAVAAKSTIIRLRKQKEEAQKS</sequence>
<feature type="chain" id="PRO_0000139828" description="Large ribosomal subunit protein eL43">
    <location>
        <begin position="1"/>
        <end position="96"/>
    </location>
</feature>
<feature type="zinc finger region" description="C4-type">
    <location>
        <begin position="39"/>
        <end position="60"/>
    </location>
</feature>
<feature type="splice variant" id="VSP_061636" description="In isoform 2." evidence="5">
    <original>RKQIKKIELMQHA</original>
    <variation>HCHKKNLCRNMEM</variation>
    <location>
        <begin position="23"/>
        <end position="35"/>
    </location>
</feature>
<feature type="splice variant" id="VSP_061637" description="In isoform 2." evidence="5">
    <location>
        <begin position="36"/>
        <end position="96"/>
    </location>
</feature>
<protein>
    <recommendedName>
        <fullName evidence="5">Large ribosomal subunit protein eL43</fullName>
    </recommendedName>
    <alternativeName>
        <fullName>60S ribosomal protein L37a</fullName>
    </alternativeName>
</protein>
<reference key="1">
    <citation type="journal article" date="1998" name="Science">
        <title>Chromosome 2 sequence of the human malaria parasite Plasmodium falciparum.</title>
        <authorList>
            <person name="Gardner M.J."/>
            <person name="Tettelin H."/>
            <person name="Carucci D.J."/>
            <person name="Cummings L.M."/>
            <person name="Aravind L."/>
            <person name="Koonin E.V."/>
            <person name="Shallom S.J."/>
            <person name="Mason T."/>
            <person name="Yu K."/>
            <person name="Fujii C."/>
            <person name="Pederson J."/>
            <person name="Shen K."/>
            <person name="Jing J."/>
            <person name="Aston C."/>
            <person name="Lai Z."/>
            <person name="Schwartz D.C."/>
            <person name="Pertea M."/>
            <person name="Salzberg S.L."/>
            <person name="Zhou L."/>
            <person name="Sutton G.G."/>
            <person name="Clayton R."/>
            <person name="White O."/>
            <person name="Smith H.O."/>
            <person name="Fraser C.M."/>
            <person name="Adams M.D."/>
            <person name="Venter J.C."/>
            <person name="Hoffman S.L."/>
        </authorList>
    </citation>
    <scope>NUCLEOTIDE SEQUENCE [LARGE SCALE GENOMIC DNA]</scope>
    <source>
        <strain>3D7</strain>
    </source>
</reference>
<reference key="2">
    <citation type="journal article" date="2002" name="Nature">
        <title>Genome sequence of the human malaria parasite Plasmodium falciparum.</title>
        <authorList>
            <person name="Gardner M.J."/>
            <person name="Hall N."/>
            <person name="Fung E."/>
            <person name="White O."/>
            <person name="Berriman M."/>
            <person name="Hyman R.W."/>
            <person name="Carlton J.M."/>
            <person name="Pain A."/>
            <person name="Nelson K.E."/>
            <person name="Bowman S."/>
            <person name="Paulsen I.T."/>
            <person name="James K.D."/>
            <person name="Eisen J.A."/>
            <person name="Rutherford K.M."/>
            <person name="Salzberg S.L."/>
            <person name="Craig A."/>
            <person name="Kyes S."/>
            <person name="Chan M.-S."/>
            <person name="Nene V."/>
            <person name="Shallom S.J."/>
            <person name="Suh B."/>
            <person name="Peterson J."/>
            <person name="Angiuoli S."/>
            <person name="Pertea M."/>
            <person name="Allen J."/>
            <person name="Selengut J."/>
            <person name="Haft D."/>
            <person name="Mather M.W."/>
            <person name="Vaidya A.B."/>
            <person name="Martin D.M.A."/>
            <person name="Fairlamb A.H."/>
            <person name="Fraunholz M.J."/>
            <person name="Roos D.S."/>
            <person name="Ralph S.A."/>
            <person name="McFadden G.I."/>
            <person name="Cummings L.M."/>
            <person name="Subramanian G.M."/>
            <person name="Mungall C."/>
            <person name="Venter J.C."/>
            <person name="Carucci D.J."/>
            <person name="Hoffman S.L."/>
            <person name="Newbold C."/>
            <person name="Davis R.W."/>
            <person name="Fraser C.M."/>
            <person name="Barrell B.G."/>
        </authorList>
    </citation>
    <scope>NUCLEOTIDE SEQUENCE [LARGE SCALE GENOMIC DNA]</scope>
    <source>
        <strain>3D7</strain>
    </source>
</reference>
<reference evidence="8" key="3">
    <citation type="journal article" date="2014" name="Elife">
        <title>Cryo-EM structure of the Plasmodium falciparum 80S ribosome bound to the anti-protozoan drug emetine.</title>
        <authorList>
            <person name="Wong W."/>
            <person name="Bai X.C."/>
            <person name="Brown A."/>
            <person name="Fernandez I.S."/>
            <person name="Hanssen E."/>
            <person name="Condron M."/>
            <person name="Tan Y.H."/>
            <person name="Baum J."/>
            <person name="Scheres S.H."/>
        </authorList>
    </citation>
    <scope>STRUCTURE BY ELECTRON MICROSCOPY (3.20 ANGSTROMS) IN COMPLEX WITH RIBOSOMAL PROTEINS; RRNA; TRNA AND EMETINE INHIBITOR</scope>
    <scope>FUNCTION</scope>
    <scope>SUBCELLULAR LOCATION</scope>
    <scope>DEVELOPMENTAL STAGE</scope>
</reference>
<reference evidence="9 10 11" key="4">
    <citation type="journal article" date="2015" name="Nucleic Acids Res.">
        <title>Dynamical features of the Plasmodium falciparum ribosome during translation.</title>
        <authorList>
            <person name="Sun M."/>
            <person name="Li W."/>
            <person name="Blomqvist K."/>
            <person name="Das S."/>
            <person name="Hashem Y."/>
            <person name="Dvorin J.D."/>
            <person name="Frank J."/>
        </authorList>
    </citation>
    <scope>STRUCTURE BY ELECTRON MICROSCOPY (4.70 ANGSTROMS) OF 2-86 IN COMPLEX WITH RIBOSOMAL PROTEINS; RRNA AND TRNA</scope>
    <scope>FUNCTION</scope>
    <scope>DEVELOPMENTAL STAGE</scope>
</reference>
<reference evidence="12" key="5">
    <citation type="journal article" date="2017" name="Nat. Microbiol.">
        <title>Mefloquine targets the Plasmodium falciparum 80S ribosome to inhibit protein synthesis.</title>
        <authorList>
            <person name="Wong W."/>
            <person name="Bai X.C."/>
            <person name="Sleebs B.E."/>
            <person name="Triglia T."/>
            <person name="Brown A."/>
            <person name="Thompson J.K."/>
            <person name="Jackson K.E."/>
            <person name="Hanssen E."/>
            <person name="Marapana D.S."/>
            <person name="Fernandez I.S."/>
            <person name="Ralph S.A."/>
            <person name="Cowman A.F."/>
            <person name="Scheres S.H.W."/>
            <person name="Baum J."/>
        </authorList>
    </citation>
    <scope>STRUCTURE BY ELECTRON MICROSCOPY (3.20 ANGSTROMS) IN COMPLEX WITH RIBOSOMAL PROTEINS; RRNA AND MEFLOQUINE INHIBITOR</scope>
    <scope>FUNCTION</scope>
</reference>
<gene>
    <name evidence="5" type="primary">RPL37A</name>
    <name evidence="4" type="synonym">eL43</name>
    <name type="ORF">PF3D7_0210100</name>
    <name type="ORF">PFB0455w</name>
</gene>
<dbReference type="EMBL" id="LN999943">
    <property type="protein sequence ID" value="CZT98114.1"/>
    <property type="molecule type" value="Genomic_DNA"/>
</dbReference>
<dbReference type="EMBL" id="LN999943">
    <property type="protein sequence ID" value="CZT98115.1"/>
    <property type="molecule type" value="Genomic_DNA"/>
</dbReference>
<dbReference type="PIR" id="C71614">
    <property type="entry name" value="C71614"/>
</dbReference>
<dbReference type="RefSeq" id="XP_001349609.1">
    <molecule id="O96184-1"/>
    <property type="nucleotide sequence ID" value="XM_001349573.1"/>
</dbReference>
<dbReference type="PDB" id="3J79">
    <property type="method" value="EM"/>
    <property type="resolution" value="3.20 A"/>
    <property type="chains" value="h=1-96"/>
</dbReference>
<dbReference type="PDB" id="3JBN">
    <property type="method" value="EM"/>
    <property type="resolution" value="4.70 A"/>
    <property type="chains" value="Ah=2-86"/>
</dbReference>
<dbReference type="PDB" id="3JBO">
    <property type="method" value="EM"/>
    <property type="resolution" value="5.80 A"/>
    <property type="chains" value="Ah=2-86"/>
</dbReference>
<dbReference type="PDB" id="3JBP">
    <property type="method" value="EM"/>
    <property type="resolution" value="6.70 A"/>
    <property type="chains" value="Ah=2-86"/>
</dbReference>
<dbReference type="PDB" id="5UMD">
    <property type="method" value="EM"/>
    <property type="resolution" value="3.20 A"/>
    <property type="chains" value="h=1-96"/>
</dbReference>
<dbReference type="PDB" id="8TPU">
    <property type="method" value="EM"/>
    <property type="resolution" value="4.10 A"/>
    <property type="chains" value="Ah=1-96"/>
</dbReference>
<dbReference type="PDBsum" id="3J79"/>
<dbReference type="PDBsum" id="3JBN"/>
<dbReference type="PDBsum" id="3JBO"/>
<dbReference type="PDBsum" id="3JBP"/>
<dbReference type="PDBsum" id="5UMD"/>
<dbReference type="PDBsum" id="8TPU"/>
<dbReference type="EMDB" id="EMD-8576"/>
<dbReference type="SMR" id="O96184"/>
<dbReference type="FunCoup" id="O96184">
    <property type="interactions" value="92"/>
</dbReference>
<dbReference type="IntAct" id="O96184">
    <property type="interactions" value="1"/>
</dbReference>
<dbReference type="STRING" id="36329.O96184"/>
<dbReference type="PaxDb" id="5833-PFB0455w.1"/>
<dbReference type="EnsemblProtists" id="CZT98114">
    <molecule id="O96184-2"/>
    <property type="protein sequence ID" value="CZT98114"/>
    <property type="gene ID" value="PF3D7_0210100.2"/>
</dbReference>
<dbReference type="EnsemblProtists" id="CZT98115">
    <molecule id="O96184-1"/>
    <property type="protein sequence ID" value="CZT98115"/>
    <property type="gene ID" value="PF3D7_0210100.1"/>
</dbReference>
<dbReference type="KEGG" id="pfa:PF3D7_0210100.1"/>
<dbReference type="VEuPathDB" id="PlasmoDB:PF3D7_0210100"/>
<dbReference type="HOGENOM" id="CLU_141199_1_0_1"/>
<dbReference type="OMA" id="GPRYGRK"/>
<dbReference type="OrthoDB" id="10258345at2759"/>
<dbReference type="Proteomes" id="UP000001450">
    <property type="component" value="Chromosome 2"/>
</dbReference>
<dbReference type="GO" id="GO:0022626">
    <property type="term" value="C:cytosolic ribosome"/>
    <property type="evidence" value="ECO:0000318"/>
    <property type="project" value="GO_Central"/>
</dbReference>
<dbReference type="GO" id="GO:1990904">
    <property type="term" value="C:ribonucleoprotein complex"/>
    <property type="evidence" value="ECO:0007669"/>
    <property type="project" value="UniProtKB-KW"/>
</dbReference>
<dbReference type="GO" id="GO:0003735">
    <property type="term" value="F:structural constituent of ribosome"/>
    <property type="evidence" value="ECO:0000318"/>
    <property type="project" value="GO_Central"/>
</dbReference>
<dbReference type="GO" id="GO:0008270">
    <property type="term" value="F:zinc ion binding"/>
    <property type="evidence" value="ECO:0007669"/>
    <property type="project" value="UniProtKB-KW"/>
</dbReference>
<dbReference type="GO" id="GO:0006412">
    <property type="term" value="P:translation"/>
    <property type="evidence" value="ECO:0007669"/>
    <property type="project" value="InterPro"/>
</dbReference>
<dbReference type="Gene3D" id="2.20.25.30">
    <property type="match status" value="1"/>
</dbReference>
<dbReference type="HAMAP" id="MF_00327">
    <property type="entry name" value="Ribosomal_eL43"/>
    <property type="match status" value="1"/>
</dbReference>
<dbReference type="InterPro" id="IPR011331">
    <property type="entry name" value="Ribosomal_eL37/eL43"/>
</dbReference>
<dbReference type="InterPro" id="IPR002674">
    <property type="entry name" value="Ribosomal_eL43"/>
</dbReference>
<dbReference type="InterPro" id="IPR050522">
    <property type="entry name" value="Ribosomal_protein_eL43"/>
</dbReference>
<dbReference type="InterPro" id="IPR011332">
    <property type="entry name" value="Ribosomal_zn-bd"/>
</dbReference>
<dbReference type="NCBIfam" id="TIGR00280">
    <property type="entry name" value="eL43_euk_arch"/>
    <property type="match status" value="1"/>
</dbReference>
<dbReference type="PANTHER" id="PTHR48129">
    <property type="entry name" value="60S RIBOSOMAL PROTEIN L37A"/>
    <property type="match status" value="1"/>
</dbReference>
<dbReference type="PANTHER" id="PTHR48129:SF1">
    <property type="entry name" value="LARGE RIBOSOMAL SUBUNIT PROTEIN EL43"/>
    <property type="match status" value="1"/>
</dbReference>
<dbReference type="Pfam" id="PF01780">
    <property type="entry name" value="Ribosomal_L37ae"/>
    <property type="match status" value="1"/>
</dbReference>
<dbReference type="SUPFAM" id="SSF57829">
    <property type="entry name" value="Zn-binding ribosomal proteins"/>
    <property type="match status" value="1"/>
</dbReference>
<evidence type="ECO:0000269" key="1">
    <source>
    </source>
</evidence>
<evidence type="ECO:0000269" key="2">
    <source>
    </source>
</evidence>
<evidence type="ECO:0000269" key="3">
    <source>
    </source>
</evidence>
<evidence type="ECO:0000303" key="4">
    <source>
    </source>
</evidence>
<evidence type="ECO:0000305" key="5"/>
<evidence type="ECO:0000305" key="6">
    <source>
    </source>
</evidence>
<evidence type="ECO:0000305" key="7">
    <source>
    </source>
</evidence>
<evidence type="ECO:0007744" key="8">
    <source>
        <dbReference type="PDB" id="3J79"/>
    </source>
</evidence>
<evidence type="ECO:0007744" key="9">
    <source>
        <dbReference type="PDB" id="3JBN"/>
    </source>
</evidence>
<evidence type="ECO:0007744" key="10">
    <source>
        <dbReference type="PDB" id="3JBO"/>
    </source>
</evidence>
<evidence type="ECO:0007744" key="11">
    <source>
        <dbReference type="PDB" id="3JBP"/>
    </source>
</evidence>
<evidence type="ECO:0007744" key="12">
    <source>
        <dbReference type="PDB" id="5UMD"/>
    </source>
</evidence>
<comment type="function">
    <text evidence="3 6 7">Component of the ribosome, a large ribonucleoprotein complex responsible for the synthesis of proteins in the cell (PubMed:28288098). The small ribosomal subunit (SSU) binds messenger RNAs (mRNAs) and translates the encoded message by selecting cognate aminoacyl-transfer RNA (tRNA) molecules (Probable). The large subunit (LSU) contains the ribosomal catalytic site termed the peptidyl transferase center (PTC), which catalyzes the formation of peptide bonds, thereby polymerizing the amino acids delivered by tRNAs into a polypeptide chain (Probable). The nascent polypeptides leave the ribosome through a tunnel in the LSU and interact with protein factors that function in enzymatic processing, targeting, and the membrane insertion of nascent chains at the exit of the ribosomal tunnel (Probable).</text>
</comment>
<comment type="subunit">
    <text evidence="1 2 3">Component of the large ribosomal subunit (PubMed:24913268, PubMed:26432834, PubMed:28288098). Mature ribosomes consist of a small (40S) and a large (60S) subunit (PubMed:24913268, PubMed:26432834). The 40S subunit contains about 32 different proteins and 1 molecule of RNA (18S). The 60S subunit contains about 42 different proteins and 3 molecules of RNA (28S, 5.8S and 5S) (PubMed:24913268, PubMed:26432834).</text>
</comment>
<comment type="subcellular location">
    <subcellularLocation>
        <location evidence="1">Cytoplasm</location>
    </subcellularLocation>
</comment>
<comment type="alternative products">
    <event type="alternative splicing"/>
    <isoform>
        <id>O96184-1</id>
        <name>1</name>
        <sequence type="displayed"/>
    </isoform>
    <isoform>
        <id>O96184-2</id>
        <name>2</name>
        <sequence type="described" ref="VSP_061636 VSP_061637"/>
    </isoform>
</comment>
<comment type="developmental stage">
    <text evidence="1 2">Expressed during the asexual blood stage (at protein level).</text>
</comment>
<comment type="similarity">
    <text evidence="5">Belongs to the eukaryotic ribosomal protein eL43 family.</text>
</comment>
<organism>
    <name type="scientific">Plasmodium falciparum (isolate 3D7)</name>
    <dbReference type="NCBI Taxonomy" id="36329"/>
    <lineage>
        <taxon>Eukaryota</taxon>
        <taxon>Sar</taxon>
        <taxon>Alveolata</taxon>
        <taxon>Apicomplexa</taxon>
        <taxon>Aconoidasida</taxon>
        <taxon>Haemosporida</taxon>
        <taxon>Plasmodiidae</taxon>
        <taxon>Plasmodium</taxon>
        <taxon>Plasmodium (Laverania)</taxon>
    </lineage>
</organism>